<dbReference type="EMBL" id="BT020733">
    <property type="protein sequence ID" value="AAX08750.1"/>
    <property type="molecule type" value="mRNA"/>
</dbReference>
<dbReference type="RefSeq" id="NP_001014901.1">
    <property type="nucleotide sequence ID" value="NM_001014901.1"/>
</dbReference>
<dbReference type="SMR" id="Q5EA36"/>
<dbReference type="FunCoup" id="Q5EA36">
    <property type="interactions" value="3200"/>
</dbReference>
<dbReference type="STRING" id="9913.ENSBTAP00000001619"/>
<dbReference type="iPTMnet" id="Q5EA36"/>
<dbReference type="PaxDb" id="9913-ENSBTAP00000001619"/>
<dbReference type="GeneID" id="511512"/>
<dbReference type="KEGG" id="bta:511512"/>
<dbReference type="CTD" id="10432"/>
<dbReference type="eggNOG" id="ENOG502R6FF">
    <property type="taxonomic scope" value="Eukaryota"/>
</dbReference>
<dbReference type="InParanoid" id="Q5EA36"/>
<dbReference type="OrthoDB" id="1879688at2759"/>
<dbReference type="Proteomes" id="UP000009136">
    <property type="component" value="Unplaced"/>
</dbReference>
<dbReference type="GO" id="GO:0005737">
    <property type="term" value="C:cytoplasm"/>
    <property type="evidence" value="ECO:0000250"/>
    <property type="project" value="UniProtKB"/>
</dbReference>
<dbReference type="GO" id="GO:0005730">
    <property type="term" value="C:nucleolus"/>
    <property type="evidence" value="ECO:0007669"/>
    <property type="project" value="UniProtKB-SubCell"/>
</dbReference>
<dbReference type="GO" id="GO:0005634">
    <property type="term" value="C:nucleus"/>
    <property type="evidence" value="ECO:0000250"/>
    <property type="project" value="UniProtKB"/>
</dbReference>
<dbReference type="GO" id="GO:0003729">
    <property type="term" value="F:mRNA binding"/>
    <property type="evidence" value="ECO:0000318"/>
    <property type="project" value="GO_Central"/>
</dbReference>
<dbReference type="GO" id="GO:0098534">
    <property type="term" value="P:centriole assembly"/>
    <property type="evidence" value="ECO:0000250"/>
    <property type="project" value="UniProtKB"/>
</dbReference>
<dbReference type="GO" id="GO:0045087">
    <property type="term" value="P:innate immune response"/>
    <property type="evidence" value="ECO:0007669"/>
    <property type="project" value="UniProtKB-KW"/>
</dbReference>
<dbReference type="CDD" id="cd12608">
    <property type="entry name" value="RRM1_CoAA"/>
    <property type="match status" value="1"/>
</dbReference>
<dbReference type="CDD" id="cd12609">
    <property type="entry name" value="RRM2_CoAA"/>
    <property type="match status" value="1"/>
</dbReference>
<dbReference type="FunFam" id="3.30.70.330:FF:000046">
    <property type="entry name" value="RNA-binding protein 14 isoform X1"/>
    <property type="match status" value="2"/>
</dbReference>
<dbReference type="Gene3D" id="3.30.70.330">
    <property type="match status" value="2"/>
</dbReference>
<dbReference type="InterPro" id="IPR012677">
    <property type="entry name" value="Nucleotide-bd_a/b_plait_sf"/>
</dbReference>
<dbReference type="InterPro" id="IPR035979">
    <property type="entry name" value="RBD_domain_sf"/>
</dbReference>
<dbReference type="InterPro" id="IPR034506">
    <property type="entry name" value="RBM14_RRM1"/>
</dbReference>
<dbReference type="InterPro" id="IPR034507">
    <property type="entry name" value="RBM14_RRM2"/>
</dbReference>
<dbReference type="InterPro" id="IPR000504">
    <property type="entry name" value="RRM_dom"/>
</dbReference>
<dbReference type="InterPro" id="IPR050907">
    <property type="entry name" value="SRSF"/>
</dbReference>
<dbReference type="PANTHER" id="PTHR23147">
    <property type="entry name" value="SERINE/ARGININE RICH SPLICING FACTOR"/>
    <property type="match status" value="1"/>
</dbReference>
<dbReference type="Pfam" id="PF00076">
    <property type="entry name" value="RRM_1"/>
    <property type="match status" value="2"/>
</dbReference>
<dbReference type="SMART" id="SM00360">
    <property type="entry name" value="RRM"/>
    <property type="match status" value="2"/>
</dbReference>
<dbReference type="SUPFAM" id="SSF54928">
    <property type="entry name" value="RNA-binding domain, RBD"/>
    <property type="match status" value="2"/>
</dbReference>
<dbReference type="PROSITE" id="PS50102">
    <property type="entry name" value="RRM"/>
    <property type="match status" value="2"/>
</dbReference>
<proteinExistence type="evidence at transcript level"/>
<organism>
    <name type="scientific">Bos taurus</name>
    <name type="common">Bovine</name>
    <dbReference type="NCBI Taxonomy" id="9913"/>
    <lineage>
        <taxon>Eukaryota</taxon>
        <taxon>Metazoa</taxon>
        <taxon>Chordata</taxon>
        <taxon>Craniata</taxon>
        <taxon>Vertebrata</taxon>
        <taxon>Euteleostomi</taxon>
        <taxon>Mammalia</taxon>
        <taxon>Eutheria</taxon>
        <taxon>Laurasiatheria</taxon>
        <taxon>Artiodactyla</taxon>
        <taxon>Ruminantia</taxon>
        <taxon>Pecora</taxon>
        <taxon>Bovidae</taxon>
        <taxon>Bovinae</taxon>
        <taxon>Bos</taxon>
    </lineage>
</organism>
<accession>Q5EA36</accession>
<comment type="function">
    <text evidence="2">May function as a nuclear receptor coactivator, enhancing transcription through other coactivators such as NCOA6 and CITED1. Regulates centriole biogenesis by suppressing the formation of aberrant centriolar protein complexes in the cytoplasm and thus preserving mitotic spindle integrity. Prevents the formation of the STIL-CPAP complex (which can induce the formation of aberrant centriolar protein complexes) by interfering with the interaction of STIL with CPAP. Plays a role in the regulation of DNA virus-mediated innate immune response by assembling into the HDP-RNP complex, a complex that serves as a platform for IRF3 phosphorylation and subsequent innate immune response activation through the cGAS-STING pathway.</text>
</comment>
<comment type="subunit">
    <text evidence="2">Interacts with NCOA6, CITED1 and XRCC5/KU86. Interacts with SS18. Interacts with STIL and interferes with its interaction with CPAP. Interacts with gamma-tubulin. Part of the HDP-RNP complex composed of at least HEXIM1, PRKDC, XRCC5, XRCC6, paraspeckle proteins (SFPQ, NONO, PSPC1, RBM14, and MATR3) and NEAT1 RNA.</text>
</comment>
<comment type="subcellular location">
    <subcellularLocation>
        <location evidence="2">Nucleus</location>
    </subcellularLocation>
    <subcellularLocation>
        <location evidence="2">Nucleus</location>
        <location evidence="2">Nucleolus</location>
    </subcellularLocation>
    <subcellularLocation>
        <location evidence="2">Cytoplasm</location>
    </subcellularLocation>
    <text evidence="2">In punctate subnuclear structures often located adjacent to splicing speckles, called paraspeckles. Cytoplasmic localization is crucial for its function in suppressing the formation of aberrant centriolar protein complexes.</text>
</comment>
<reference key="1">
    <citation type="journal article" date="2005" name="BMC Genomics">
        <title>Characterization of 954 bovine full-CDS cDNA sequences.</title>
        <authorList>
            <person name="Harhay G.P."/>
            <person name="Sonstegard T.S."/>
            <person name="Keele J.W."/>
            <person name="Heaton M.P."/>
            <person name="Clawson M.L."/>
            <person name="Snelling W.M."/>
            <person name="Wiedmann R.T."/>
            <person name="Van Tassell C.P."/>
            <person name="Smith T.P.L."/>
        </authorList>
    </citation>
    <scope>NUCLEOTIDE SEQUENCE [LARGE SCALE MRNA]</scope>
</reference>
<feature type="chain" id="PRO_0000081773" description="RNA-binding protein 14">
    <location>
        <begin position="1"/>
        <end position="669"/>
    </location>
</feature>
<feature type="domain" description="RRM 1" evidence="3">
    <location>
        <begin position="1"/>
        <end position="73"/>
    </location>
</feature>
<feature type="domain" description="RRM 2" evidence="3">
    <location>
        <begin position="79"/>
        <end position="149"/>
    </location>
</feature>
<feature type="region of interest" description="Disordered" evidence="4">
    <location>
        <begin position="148"/>
        <end position="175"/>
    </location>
</feature>
<feature type="region of interest" description="Disordered" evidence="4">
    <location>
        <begin position="193"/>
        <end position="232"/>
    </location>
</feature>
<feature type="region of interest" description="Disordered" evidence="4">
    <location>
        <begin position="284"/>
        <end position="303"/>
    </location>
</feature>
<feature type="region of interest" description="TRBP-interacting domain; interaction with STIL" evidence="2">
    <location>
        <begin position="307"/>
        <end position="354"/>
    </location>
</feature>
<feature type="region of interest" description="Disordered" evidence="4">
    <location>
        <begin position="569"/>
        <end position="590"/>
    </location>
</feature>
<feature type="compositionally biased region" description="Low complexity" evidence="4">
    <location>
        <begin position="287"/>
        <end position="303"/>
    </location>
</feature>
<feature type="modified residue" description="Phosphoserine" evidence="2">
    <location>
        <position position="161"/>
    </location>
</feature>
<feature type="modified residue" description="N6-acetyllysine; alternate" evidence="1">
    <location>
        <position position="164"/>
    </location>
</feature>
<feature type="modified residue" description="Phosphothreonine" evidence="2">
    <location>
        <position position="206"/>
    </location>
</feature>
<feature type="modified residue" description="Phosphoserine" evidence="2">
    <location>
        <position position="220"/>
    </location>
</feature>
<feature type="modified residue" description="Phosphoserine" evidence="2">
    <location>
        <position position="242"/>
    </location>
</feature>
<feature type="modified residue" description="Phosphoserine" evidence="2">
    <location>
        <position position="244"/>
    </location>
</feature>
<feature type="modified residue" description="Phosphoserine" evidence="2">
    <location>
        <position position="256"/>
    </location>
</feature>
<feature type="modified residue" description="Phosphoserine" evidence="2">
    <location>
        <position position="272"/>
    </location>
</feature>
<feature type="modified residue" description="Phosphoserine" evidence="2">
    <location>
        <position position="280"/>
    </location>
</feature>
<feature type="modified residue" description="Phosphoserine" evidence="2">
    <location>
        <position position="520"/>
    </location>
</feature>
<feature type="modified residue" description="Phosphoserine" evidence="2">
    <location>
        <position position="523"/>
    </location>
</feature>
<feature type="modified residue" description="Phosphoserine" evidence="2">
    <location>
        <position position="527"/>
    </location>
</feature>
<feature type="modified residue" description="Phosphoserine" evidence="2">
    <location>
        <position position="562"/>
    </location>
</feature>
<feature type="modified residue" description="Phosphothreonine" evidence="2">
    <location>
        <position position="572"/>
    </location>
</feature>
<feature type="modified residue" description="Phosphoserine" evidence="2">
    <location>
        <position position="582"/>
    </location>
</feature>
<feature type="modified residue" description="Phosphoserine" evidence="2">
    <location>
        <position position="618"/>
    </location>
</feature>
<feature type="modified residue" description="Phosphoserine" evidence="2">
    <location>
        <position position="620"/>
    </location>
</feature>
<feature type="modified residue" description="Phosphoserine" evidence="2">
    <location>
        <position position="623"/>
    </location>
</feature>
<feature type="modified residue" description="Phosphoserine" evidence="2">
    <location>
        <position position="627"/>
    </location>
</feature>
<feature type="modified residue" description="Phosphoserine" evidence="2">
    <location>
        <position position="643"/>
    </location>
</feature>
<feature type="modified residue" description="Phosphoserine" evidence="2">
    <location>
        <position position="649"/>
    </location>
</feature>
<feature type="cross-link" description="Glycyl lysine isopeptide (Lys-Gly) (interchain with G-Cter in SUMO2)" evidence="2">
    <location>
        <position position="126"/>
    </location>
</feature>
<feature type="cross-link" description="Glycyl lysine isopeptide (Lys-Gly) (interchain with G-Cter in SUMO2)" evidence="2">
    <location>
        <position position="135"/>
    </location>
</feature>
<feature type="cross-link" description="Glycyl lysine isopeptide (Lys-Gly) (interchain with G-Cter in SUMO2)" evidence="2">
    <location>
        <position position="138"/>
    </location>
</feature>
<feature type="cross-link" description="Glycyl lysine isopeptide (Lys-Gly) (interchain with G-Cter in SUMO2)" evidence="2">
    <location>
        <position position="149"/>
    </location>
</feature>
<feature type="cross-link" description="Glycyl lysine isopeptide (Lys-Gly) (interchain with G-Cter in SUMO2)" evidence="2">
    <location>
        <position position="153"/>
    </location>
</feature>
<feature type="cross-link" description="Glycyl lysine isopeptide (Lys-Gly) (interchain with G-Cter in SUMO2); alternate" evidence="2">
    <location>
        <position position="164"/>
    </location>
</feature>
<feature type="cross-link" description="Glycyl lysine isopeptide (Lys-Gly) (interchain with G-Cter in SUMO2)" evidence="2">
    <location>
        <position position="600"/>
    </location>
</feature>
<protein>
    <recommendedName>
        <fullName>RNA-binding protein 14</fullName>
    </recommendedName>
    <alternativeName>
        <fullName>RNA-binding motif protein 14</fullName>
    </alternativeName>
</protein>
<keyword id="KW-0007">Acetylation</keyword>
<keyword id="KW-0963">Cytoplasm</keyword>
<keyword id="KW-0391">Immunity</keyword>
<keyword id="KW-0399">Innate immunity</keyword>
<keyword id="KW-1017">Isopeptide bond</keyword>
<keyword id="KW-0539">Nucleus</keyword>
<keyword id="KW-0597">Phosphoprotein</keyword>
<keyword id="KW-1185">Reference proteome</keyword>
<keyword id="KW-0677">Repeat</keyword>
<keyword id="KW-0694">RNA-binding</keyword>
<keyword id="KW-0804">Transcription</keyword>
<keyword id="KW-0805">Transcription regulation</keyword>
<keyword id="KW-0832">Ubl conjugation</keyword>
<sequence length="669" mass="69603">MKIFVGNVDGADTTPEELAALFAPYGTVMSCAVMKQFAFVHMRENAGAVRAIEALHGHELRPGRALVVEMSRPRPLNTWKIFVGNVSAACTSQELRSLFERRGRVIECDVVKDYAFVHMEKEADAKAAIAQLNGKEVKGKRINVELSTKGQKKGPGLAIQSGDKTKKPGAGDTAFPGTGGFSATFDYQQAFGNSTGGFDGQARQPTPPFFGRDRSPLRRSPPRASYVAPLTAQPATYRAQPSVSLGAAYRAQPSASLGVGYRTQPMTAQAASYRAQPSVSLGAPYRGQLASPSSQSAAASSLGPYGGAQPSASALSSYGGQPAAASSLNSYGAQGSSLASYGNQPSSYGAQAASSYGVRAAASSYNTQGAANSLGSYGAQAASYGAQSAASSLAYGAQAASYNAQPSASYNAQSAPYAAQQAASYSSQPAAYVAQPATAAAYASQPAAYAAQATTPMAGSYGAQPVVQTQLNSYGAQASMGLSGSYGAQSAAAATGSYGAAAAYGAQPSATLAAPYRTQSSASLAASYAAQQHPQAAASYRGQPGNAYDGTGQPSAAYLSMSQGVVANANSTPPPYERTRLSPPRASYDDPYKKAVAMSKRYGSDRRLAELSDYRRLSESQLSFRRSPTKSSLDYRRLPDAHSDYARYSGSYNDYLRAAQMHSGYQRRM</sequence>
<gene>
    <name type="primary">RBM14</name>
</gene>
<evidence type="ECO:0000250" key="1">
    <source>
        <dbReference type="UniProtKB" id="Q8C2Q3"/>
    </source>
</evidence>
<evidence type="ECO:0000250" key="2">
    <source>
        <dbReference type="UniProtKB" id="Q96PK6"/>
    </source>
</evidence>
<evidence type="ECO:0000255" key="3">
    <source>
        <dbReference type="PROSITE-ProRule" id="PRU00176"/>
    </source>
</evidence>
<evidence type="ECO:0000256" key="4">
    <source>
        <dbReference type="SAM" id="MobiDB-lite"/>
    </source>
</evidence>
<name>RBM14_BOVIN</name>